<sequence>MAQEVRLRLSSTDHYKLEEVCERIKKVVEETGAQMSGPIPLPTKRLLVPTRKSPDGEGKATWDKWEMRIHKRLIDIKGDERTIRRLMRIHIPEEVHVEIIMK</sequence>
<accession>Q8TYP7</accession>
<reference key="1">
    <citation type="journal article" date="2002" name="Proc. Natl. Acad. Sci. U.S.A.">
        <title>The complete genome of hyperthermophile Methanopyrus kandleri AV19 and monophyly of archaeal methanogens.</title>
        <authorList>
            <person name="Slesarev A.I."/>
            <person name="Mezhevaya K.V."/>
            <person name="Makarova K.S."/>
            <person name="Polushin N.N."/>
            <person name="Shcherbinina O.V."/>
            <person name="Shakhova V.V."/>
            <person name="Belova G.I."/>
            <person name="Aravind L."/>
            <person name="Natale D.A."/>
            <person name="Rogozin I.B."/>
            <person name="Tatusov R.L."/>
            <person name="Wolf Y.I."/>
            <person name="Stetter K.O."/>
            <person name="Malykh A.G."/>
            <person name="Koonin E.V."/>
            <person name="Kozyavkin S.A."/>
        </authorList>
    </citation>
    <scope>NUCLEOTIDE SEQUENCE [LARGE SCALE GENOMIC DNA]</scope>
    <source>
        <strain>AV19 / DSM 6324 / JCM 9639 / NBRC 100938</strain>
    </source>
</reference>
<name>RS10_METKA</name>
<comment type="function">
    <text evidence="1">Involved in the binding of tRNA to the ribosomes.</text>
</comment>
<comment type="subunit">
    <text evidence="1">Part of the 30S ribosomal subunit.</text>
</comment>
<comment type="similarity">
    <text evidence="1">Belongs to the universal ribosomal protein uS10 family.</text>
</comment>
<keyword id="KW-1185">Reference proteome</keyword>
<keyword id="KW-0687">Ribonucleoprotein</keyword>
<keyword id="KW-0689">Ribosomal protein</keyword>
<evidence type="ECO:0000255" key="1">
    <source>
        <dbReference type="HAMAP-Rule" id="MF_00508"/>
    </source>
</evidence>
<evidence type="ECO:0000256" key="2">
    <source>
        <dbReference type="SAM" id="MobiDB-lite"/>
    </source>
</evidence>
<evidence type="ECO:0000305" key="3"/>
<feature type="chain" id="PRO_0000146647" description="Small ribosomal subunit protein uS10">
    <location>
        <begin position="1"/>
        <end position="102"/>
    </location>
</feature>
<feature type="region of interest" description="Disordered" evidence="2">
    <location>
        <begin position="34"/>
        <end position="59"/>
    </location>
</feature>
<gene>
    <name evidence="1" type="primary">rps10</name>
    <name type="ordered locus">MK0246</name>
</gene>
<proteinExistence type="inferred from homology"/>
<protein>
    <recommendedName>
        <fullName evidence="1">Small ribosomal subunit protein uS10</fullName>
    </recommendedName>
    <alternativeName>
        <fullName evidence="3">30S ribosomal protein S10</fullName>
    </alternativeName>
</protein>
<dbReference type="EMBL" id="AE009439">
    <property type="protein sequence ID" value="AAM01463.1"/>
    <property type="molecule type" value="Genomic_DNA"/>
</dbReference>
<dbReference type="RefSeq" id="WP_011018618.1">
    <property type="nucleotide sequence ID" value="NC_003551.1"/>
</dbReference>
<dbReference type="SMR" id="Q8TYP7"/>
<dbReference type="FunCoup" id="Q8TYP7">
    <property type="interactions" value="147"/>
</dbReference>
<dbReference type="STRING" id="190192.MK0246"/>
<dbReference type="PaxDb" id="190192-MK0246"/>
<dbReference type="EnsemblBacteria" id="AAM01463">
    <property type="protein sequence ID" value="AAM01463"/>
    <property type="gene ID" value="MK0246"/>
</dbReference>
<dbReference type="GeneID" id="1477549"/>
<dbReference type="KEGG" id="mka:MK0246"/>
<dbReference type="PATRIC" id="fig|190192.8.peg.248"/>
<dbReference type="HOGENOM" id="CLU_122625_0_1_2"/>
<dbReference type="InParanoid" id="Q8TYP7"/>
<dbReference type="OrthoDB" id="371736at2157"/>
<dbReference type="Proteomes" id="UP000001826">
    <property type="component" value="Chromosome"/>
</dbReference>
<dbReference type="GO" id="GO:0015935">
    <property type="term" value="C:small ribosomal subunit"/>
    <property type="evidence" value="ECO:0007669"/>
    <property type="project" value="InterPro"/>
</dbReference>
<dbReference type="GO" id="GO:0003735">
    <property type="term" value="F:structural constituent of ribosome"/>
    <property type="evidence" value="ECO:0007669"/>
    <property type="project" value="InterPro"/>
</dbReference>
<dbReference type="GO" id="GO:0000049">
    <property type="term" value="F:tRNA binding"/>
    <property type="evidence" value="ECO:0007669"/>
    <property type="project" value="UniProtKB-UniRule"/>
</dbReference>
<dbReference type="GO" id="GO:0006412">
    <property type="term" value="P:translation"/>
    <property type="evidence" value="ECO:0007669"/>
    <property type="project" value="UniProtKB-UniRule"/>
</dbReference>
<dbReference type="FunFam" id="3.30.70.600:FF:000004">
    <property type="entry name" value="30S ribosomal protein S10"/>
    <property type="match status" value="1"/>
</dbReference>
<dbReference type="Gene3D" id="3.30.70.600">
    <property type="entry name" value="Ribosomal protein S10 domain"/>
    <property type="match status" value="1"/>
</dbReference>
<dbReference type="HAMAP" id="MF_00508">
    <property type="entry name" value="Ribosomal_uS10"/>
    <property type="match status" value="1"/>
</dbReference>
<dbReference type="InterPro" id="IPR001848">
    <property type="entry name" value="Ribosomal_uS10"/>
</dbReference>
<dbReference type="InterPro" id="IPR018268">
    <property type="entry name" value="Ribosomal_uS10_CS"/>
</dbReference>
<dbReference type="InterPro" id="IPR027486">
    <property type="entry name" value="Ribosomal_uS10_dom"/>
</dbReference>
<dbReference type="InterPro" id="IPR036838">
    <property type="entry name" value="Ribosomal_uS10_dom_sf"/>
</dbReference>
<dbReference type="InterPro" id="IPR005729">
    <property type="entry name" value="Ribosomal_uS10_euk/arc"/>
</dbReference>
<dbReference type="NCBIfam" id="TIGR01046">
    <property type="entry name" value="uS10_euk_arch"/>
    <property type="match status" value="1"/>
</dbReference>
<dbReference type="PANTHER" id="PTHR11700">
    <property type="entry name" value="30S RIBOSOMAL PROTEIN S10 FAMILY MEMBER"/>
    <property type="match status" value="1"/>
</dbReference>
<dbReference type="Pfam" id="PF00338">
    <property type="entry name" value="Ribosomal_S10"/>
    <property type="match status" value="1"/>
</dbReference>
<dbReference type="PRINTS" id="PR00971">
    <property type="entry name" value="RIBOSOMALS10"/>
</dbReference>
<dbReference type="SMART" id="SM01403">
    <property type="entry name" value="Ribosomal_S10"/>
    <property type="match status" value="1"/>
</dbReference>
<dbReference type="SUPFAM" id="SSF54999">
    <property type="entry name" value="Ribosomal protein S10"/>
    <property type="match status" value="1"/>
</dbReference>
<dbReference type="PROSITE" id="PS00361">
    <property type="entry name" value="RIBOSOMAL_S10"/>
    <property type="match status" value="1"/>
</dbReference>
<organism>
    <name type="scientific">Methanopyrus kandleri (strain AV19 / DSM 6324 / JCM 9639 / NBRC 100938)</name>
    <dbReference type="NCBI Taxonomy" id="190192"/>
    <lineage>
        <taxon>Archaea</taxon>
        <taxon>Methanobacteriati</taxon>
        <taxon>Methanobacteriota</taxon>
        <taxon>Methanomada group</taxon>
        <taxon>Methanopyri</taxon>
        <taxon>Methanopyrales</taxon>
        <taxon>Methanopyraceae</taxon>
        <taxon>Methanopyrus</taxon>
    </lineage>
</organism>